<sequence>MQSIPIKNVGADNVSQLIDRFERQYVYLRLSVTDVCNFRCNYCLPDGYKPPSHKQQFLSVSEIQRVVRAFADLGTEKVRITGGEPTLRKDFLEIAHTVSQTNGIKKVALTTNGYRMERDIDLWQQAGITDINVSVDSLDTRQFQLITGENKLQSILKGIDRAFEIGYRKIKVNAVLMKQYTAPELDKFLVWIKDKPIQMRFIELMETGEMDSFFQAQHLSGQSVMQRLLQEGWQLQPKALSDGPAKVLSHPDYQGEIGLIMPYEKNFCASCNRLRVSALGKLHLCLFGEEGIDLRDLLSEDTQQAQLEARLKAALQGKREHHYLHIGDSGIRNNLASIGG</sequence>
<name>MOAA_ACTP7</name>
<organism>
    <name type="scientific">Actinobacillus pleuropneumoniae serotype 7 (strain AP76)</name>
    <dbReference type="NCBI Taxonomy" id="537457"/>
    <lineage>
        <taxon>Bacteria</taxon>
        <taxon>Pseudomonadati</taxon>
        <taxon>Pseudomonadota</taxon>
        <taxon>Gammaproteobacteria</taxon>
        <taxon>Pasteurellales</taxon>
        <taxon>Pasteurellaceae</taxon>
        <taxon>Actinobacillus</taxon>
    </lineage>
</organism>
<protein>
    <recommendedName>
        <fullName evidence="1">GTP 3',8-cyclase</fullName>
        <ecNumber evidence="1">4.1.99.22</ecNumber>
    </recommendedName>
    <alternativeName>
        <fullName evidence="1">Molybdenum cofactor biosynthesis protein A</fullName>
    </alternativeName>
</protein>
<feature type="chain" id="PRO_1000139312" description="GTP 3',8-cyclase">
    <location>
        <begin position="1"/>
        <end position="340"/>
    </location>
</feature>
<feature type="domain" description="Radical SAM core" evidence="2">
    <location>
        <begin position="20"/>
        <end position="246"/>
    </location>
</feature>
<feature type="binding site" evidence="1">
    <location>
        <position position="29"/>
    </location>
    <ligand>
        <name>GTP</name>
        <dbReference type="ChEBI" id="CHEBI:37565"/>
    </ligand>
</feature>
<feature type="binding site" evidence="1">
    <location>
        <position position="36"/>
    </location>
    <ligand>
        <name>[4Fe-4S] cluster</name>
        <dbReference type="ChEBI" id="CHEBI:49883"/>
        <label>1</label>
        <note>4Fe-4S-S-AdoMet</note>
    </ligand>
</feature>
<feature type="binding site" evidence="1">
    <location>
        <position position="40"/>
    </location>
    <ligand>
        <name>[4Fe-4S] cluster</name>
        <dbReference type="ChEBI" id="CHEBI:49883"/>
        <label>1</label>
        <note>4Fe-4S-S-AdoMet</note>
    </ligand>
</feature>
<feature type="binding site" evidence="1">
    <location>
        <position position="42"/>
    </location>
    <ligand>
        <name>S-adenosyl-L-methionine</name>
        <dbReference type="ChEBI" id="CHEBI:59789"/>
    </ligand>
</feature>
<feature type="binding site" evidence="1">
    <location>
        <position position="43"/>
    </location>
    <ligand>
        <name>[4Fe-4S] cluster</name>
        <dbReference type="ChEBI" id="CHEBI:49883"/>
        <label>1</label>
        <note>4Fe-4S-S-AdoMet</note>
    </ligand>
</feature>
<feature type="binding site" evidence="1">
    <location>
        <position position="79"/>
    </location>
    <ligand>
        <name>GTP</name>
        <dbReference type="ChEBI" id="CHEBI:37565"/>
    </ligand>
</feature>
<feature type="binding site" evidence="1">
    <location>
        <position position="83"/>
    </location>
    <ligand>
        <name>S-adenosyl-L-methionine</name>
        <dbReference type="ChEBI" id="CHEBI:59789"/>
    </ligand>
</feature>
<feature type="binding site" evidence="1">
    <location>
        <position position="110"/>
    </location>
    <ligand>
        <name>GTP</name>
        <dbReference type="ChEBI" id="CHEBI:37565"/>
    </ligand>
</feature>
<feature type="binding site" evidence="1">
    <location>
        <position position="134"/>
    </location>
    <ligand>
        <name>S-adenosyl-L-methionine</name>
        <dbReference type="ChEBI" id="CHEBI:59789"/>
    </ligand>
</feature>
<feature type="binding site" evidence="1">
    <location>
        <position position="171"/>
    </location>
    <ligand>
        <name>GTP</name>
        <dbReference type="ChEBI" id="CHEBI:37565"/>
    </ligand>
</feature>
<feature type="binding site" evidence="1">
    <location>
        <position position="205"/>
    </location>
    <ligand>
        <name>S-adenosyl-L-methionine</name>
        <dbReference type="ChEBI" id="CHEBI:59789"/>
    </ligand>
</feature>
<feature type="binding site" evidence="1">
    <location>
        <position position="268"/>
    </location>
    <ligand>
        <name>[4Fe-4S] cluster</name>
        <dbReference type="ChEBI" id="CHEBI:49883"/>
        <label>2</label>
        <note>4Fe-4S-substrate</note>
    </ligand>
</feature>
<feature type="binding site" evidence="1">
    <location>
        <position position="271"/>
    </location>
    <ligand>
        <name>[4Fe-4S] cluster</name>
        <dbReference type="ChEBI" id="CHEBI:49883"/>
        <label>2</label>
        <note>4Fe-4S-substrate</note>
    </ligand>
</feature>
<feature type="binding site" evidence="1">
    <location>
        <begin position="273"/>
        <end position="275"/>
    </location>
    <ligand>
        <name>GTP</name>
        <dbReference type="ChEBI" id="CHEBI:37565"/>
    </ligand>
</feature>
<feature type="binding site" evidence="1">
    <location>
        <position position="285"/>
    </location>
    <ligand>
        <name>[4Fe-4S] cluster</name>
        <dbReference type="ChEBI" id="CHEBI:49883"/>
        <label>2</label>
        <note>4Fe-4S-substrate</note>
    </ligand>
</feature>
<accession>B3GXC5</accession>
<dbReference type="EC" id="4.1.99.22" evidence="1"/>
<dbReference type="EMBL" id="CP001091">
    <property type="protein sequence ID" value="ACE61384.1"/>
    <property type="molecule type" value="Genomic_DNA"/>
</dbReference>
<dbReference type="RefSeq" id="WP_005617186.1">
    <property type="nucleotide sequence ID" value="NC_010939.1"/>
</dbReference>
<dbReference type="SMR" id="B3GXC5"/>
<dbReference type="KEGG" id="apa:APP7_0732"/>
<dbReference type="HOGENOM" id="CLU_009273_0_1_6"/>
<dbReference type="UniPathway" id="UPA00344"/>
<dbReference type="Proteomes" id="UP000001226">
    <property type="component" value="Chromosome"/>
</dbReference>
<dbReference type="GO" id="GO:0051539">
    <property type="term" value="F:4 iron, 4 sulfur cluster binding"/>
    <property type="evidence" value="ECO:0007669"/>
    <property type="project" value="UniProtKB-UniRule"/>
</dbReference>
<dbReference type="GO" id="GO:0061799">
    <property type="term" value="F:cyclic pyranopterin monophosphate synthase activity"/>
    <property type="evidence" value="ECO:0007669"/>
    <property type="project" value="TreeGrafter"/>
</dbReference>
<dbReference type="GO" id="GO:0061798">
    <property type="term" value="F:GTP 3',8'-cyclase activity"/>
    <property type="evidence" value="ECO:0007669"/>
    <property type="project" value="UniProtKB-UniRule"/>
</dbReference>
<dbReference type="GO" id="GO:0005525">
    <property type="term" value="F:GTP binding"/>
    <property type="evidence" value="ECO:0007669"/>
    <property type="project" value="UniProtKB-UniRule"/>
</dbReference>
<dbReference type="GO" id="GO:0046872">
    <property type="term" value="F:metal ion binding"/>
    <property type="evidence" value="ECO:0007669"/>
    <property type="project" value="UniProtKB-KW"/>
</dbReference>
<dbReference type="GO" id="GO:1904047">
    <property type="term" value="F:S-adenosyl-L-methionine binding"/>
    <property type="evidence" value="ECO:0007669"/>
    <property type="project" value="UniProtKB-UniRule"/>
</dbReference>
<dbReference type="GO" id="GO:0006777">
    <property type="term" value="P:Mo-molybdopterin cofactor biosynthetic process"/>
    <property type="evidence" value="ECO:0007669"/>
    <property type="project" value="UniProtKB-UniRule"/>
</dbReference>
<dbReference type="CDD" id="cd01335">
    <property type="entry name" value="Radical_SAM"/>
    <property type="match status" value="1"/>
</dbReference>
<dbReference type="CDD" id="cd21117">
    <property type="entry name" value="Twitch_MoaA"/>
    <property type="match status" value="1"/>
</dbReference>
<dbReference type="FunFam" id="3.20.20.70:FF:000057">
    <property type="entry name" value="GTP 3',8-cyclase"/>
    <property type="match status" value="1"/>
</dbReference>
<dbReference type="Gene3D" id="3.20.20.70">
    <property type="entry name" value="Aldolase class I"/>
    <property type="match status" value="1"/>
</dbReference>
<dbReference type="HAMAP" id="MF_01225_B">
    <property type="entry name" value="MoaA_B"/>
    <property type="match status" value="1"/>
</dbReference>
<dbReference type="InterPro" id="IPR013785">
    <property type="entry name" value="Aldolase_TIM"/>
</dbReference>
<dbReference type="InterPro" id="IPR006638">
    <property type="entry name" value="Elp3/MiaA/NifB-like_rSAM"/>
</dbReference>
<dbReference type="InterPro" id="IPR013483">
    <property type="entry name" value="MoaA"/>
</dbReference>
<dbReference type="InterPro" id="IPR000385">
    <property type="entry name" value="MoaA_NifB_PqqE_Fe-S-bd_CS"/>
</dbReference>
<dbReference type="InterPro" id="IPR010505">
    <property type="entry name" value="MoaA_twitch"/>
</dbReference>
<dbReference type="InterPro" id="IPR050105">
    <property type="entry name" value="MoCo_biosynth_MoaA/MoaC"/>
</dbReference>
<dbReference type="InterPro" id="IPR007197">
    <property type="entry name" value="rSAM"/>
</dbReference>
<dbReference type="NCBIfam" id="TIGR02666">
    <property type="entry name" value="moaA"/>
    <property type="match status" value="1"/>
</dbReference>
<dbReference type="PANTHER" id="PTHR22960:SF28">
    <property type="entry name" value="GTP 3',8-CYCLASE"/>
    <property type="match status" value="1"/>
</dbReference>
<dbReference type="PANTHER" id="PTHR22960">
    <property type="entry name" value="MOLYBDOPTERIN COFACTOR SYNTHESIS PROTEIN A"/>
    <property type="match status" value="1"/>
</dbReference>
<dbReference type="Pfam" id="PF13353">
    <property type="entry name" value="Fer4_12"/>
    <property type="match status" value="1"/>
</dbReference>
<dbReference type="Pfam" id="PF06463">
    <property type="entry name" value="Mob_synth_C"/>
    <property type="match status" value="1"/>
</dbReference>
<dbReference type="Pfam" id="PF04055">
    <property type="entry name" value="Radical_SAM"/>
    <property type="match status" value="1"/>
</dbReference>
<dbReference type="SFLD" id="SFLDG01383">
    <property type="entry name" value="cyclic_pyranopterin_phosphate"/>
    <property type="match status" value="1"/>
</dbReference>
<dbReference type="SFLD" id="SFLDS00029">
    <property type="entry name" value="Radical_SAM"/>
    <property type="match status" value="1"/>
</dbReference>
<dbReference type="SMART" id="SM00729">
    <property type="entry name" value="Elp3"/>
    <property type="match status" value="1"/>
</dbReference>
<dbReference type="SUPFAM" id="SSF102114">
    <property type="entry name" value="Radical SAM enzymes"/>
    <property type="match status" value="1"/>
</dbReference>
<dbReference type="PROSITE" id="PS01305">
    <property type="entry name" value="MOAA_NIFB_PQQE"/>
    <property type="match status" value="1"/>
</dbReference>
<dbReference type="PROSITE" id="PS51918">
    <property type="entry name" value="RADICAL_SAM"/>
    <property type="match status" value="1"/>
</dbReference>
<gene>
    <name evidence="1" type="primary">moaA</name>
    <name type="ordered locus">APP7_0732</name>
</gene>
<evidence type="ECO:0000255" key="1">
    <source>
        <dbReference type="HAMAP-Rule" id="MF_01225"/>
    </source>
</evidence>
<evidence type="ECO:0000255" key="2">
    <source>
        <dbReference type="PROSITE-ProRule" id="PRU01266"/>
    </source>
</evidence>
<keyword id="KW-0004">4Fe-4S</keyword>
<keyword id="KW-0342">GTP-binding</keyword>
<keyword id="KW-0408">Iron</keyword>
<keyword id="KW-0411">Iron-sulfur</keyword>
<keyword id="KW-0456">Lyase</keyword>
<keyword id="KW-0479">Metal-binding</keyword>
<keyword id="KW-0501">Molybdenum cofactor biosynthesis</keyword>
<keyword id="KW-0547">Nucleotide-binding</keyword>
<keyword id="KW-0949">S-adenosyl-L-methionine</keyword>
<proteinExistence type="inferred from homology"/>
<reference key="1">
    <citation type="submission" date="2008-06" db="EMBL/GenBank/DDBJ databases">
        <title>Genome and proteome analysis of A. pleuropneumoniae serotype 7.</title>
        <authorList>
            <person name="Linke B."/>
            <person name="Buettner F."/>
            <person name="Martinez-Arias R."/>
            <person name="Goesmann A."/>
            <person name="Baltes N."/>
            <person name="Tegetmeyer H."/>
            <person name="Singh M."/>
            <person name="Gerlach G.F."/>
        </authorList>
    </citation>
    <scope>NUCLEOTIDE SEQUENCE [LARGE SCALE GENOMIC DNA]</scope>
    <source>
        <strain>AP76</strain>
    </source>
</reference>
<comment type="function">
    <text evidence="1">Catalyzes the cyclization of GTP to (8S)-3',8-cyclo-7,8-dihydroguanosine 5'-triphosphate.</text>
</comment>
<comment type="catalytic activity">
    <reaction evidence="1">
        <text>GTP + AH2 + S-adenosyl-L-methionine = (8S)-3',8-cyclo-7,8-dihydroguanosine 5'-triphosphate + 5'-deoxyadenosine + L-methionine + A + H(+)</text>
        <dbReference type="Rhea" id="RHEA:49576"/>
        <dbReference type="ChEBI" id="CHEBI:13193"/>
        <dbReference type="ChEBI" id="CHEBI:15378"/>
        <dbReference type="ChEBI" id="CHEBI:17319"/>
        <dbReference type="ChEBI" id="CHEBI:17499"/>
        <dbReference type="ChEBI" id="CHEBI:37565"/>
        <dbReference type="ChEBI" id="CHEBI:57844"/>
        <dbReference type="ChEBI" id="CHEBI:59789"/>
        <dbReference type="ChEBI" id="CHEBI:131766"/>
        <dbReference type="EC" id="4.1.99.22"/>
    </reaction>
</comment>
<comment type="cofactor">
    <cofactor evidence="1">
        <name>[4Fe-4S] cluster</name>
        <dbReference type="ChEBI" id="CHEBI:49883"/>
    </cofactor>
    <text evidence="1">Binds 2 [4Fe-4S] clusters. Binds 1 [4Fe-4S] cluster coordinated with 3 cysteines and an exchangeable S-adenosyl-L-methionine and 1 [4Fe-4S] cluster coordinated with 3 cysteines and the GTP-derived substrate.</text>
</comment>
<comment type="pathway">
    <text evidence="1">Cofactor biosynthesis; molybdopterin biosynthesis.</text>
</comment>
<comment type="subunit">
    <text evidence="1">Monomer and homodimer.</text>
</comment>
<comment type="similarity">
    <text evidence="1">Belongs to the radical SAM superfamily. MoaA family.</text>
</comment>